<proteinExistence type="inferred from homology"/>
<sequence length="376" mass="43331">MFVTAPEIQWIRDDASLAQQCREWRTQPYLALDTEFMRVDTFYPAAGLVQVGDGRREWLIDPLLVRDWGPFAELLEDPRVVKVLHACSEDLEVFLRLTGSLPVPLFDTQLAAAYLGMAHSMGYSKLVKEVLDIDLPKDETRSDWLQRPLTEMQMRYAADDVQHLAQVYLALDARLSEEKRAWLLEDGAELVANLCRESDPREAYREVKLGWRLRPQQLAVLRELCAWREEQARLRNRPRNHVLRERTLWPLARLLPKNKTDLAAIEDMHPRTVRQDGDFLIELIAEAARLPQSEWPEALPEPLPPEVTPLLKSLRAIGQREAETLGMAPELMLRKKILEALLKSGYPHGPYELPDSLRGWRRERMGQALLNALESA</sequence>
<dbReference type="EC" id="3.1.13.5" evidence="1"/>
<dbReference type="EMBL" id="CP000744">
    <property type="protein sequence ID" value="ABR83083.1"/>
    <property type="status" value="ALT_INIT"/>
    <property type="molecule type" value="Genomic_DNA"/>
</dbReference>
<dbReference type="SMR" id="A6V8R6"/>
<dbReference type="KEGG" id="pap:PSPA7_4097"/>
<dbReference type="HOGENOM" id="CLU_042387_0_0_6"/>
<dbReference type="Proteomes" id="UP000001582">
    <property type="component" value="Chromosome"/>
</dbReference>
<dbReference type="GO" id="GO:0005737">
    <property type="term" value="C:cytoplasm"/>
    <property type="evidence" value="ECO:0007669"/>
    <property type="project" value="UniProtKB-SubCell"/>
</dbReference>
<dbReference type="GO" id="GO:0008408">
    <property type="term" value="F:3'-5' exonuclease activity"/>
    <property type="evidence" value="ECO:0007669"/>
    <property type="project" value="InterPro"/>
</dbReference>
<dbReference type="GO" id="GO:0003676">
    <property type="term" value="F:nucleic acid binding"/>
    <property type="evidence" value="ECO:0007669"/>
    <property type="project" value="InterPro"/>
</dbReference>
<dbReference type="GO" id="GO:0000166">
    <property type="term" value="F:nucleotide binding"/>
    <property type="evidence" value="ECO:0007669"/>
    <property type="project" value="InterPro"/>
</dbReference>
<dbReference type="GO" id="GO:0033890">
    <property type="term" value="F:ribonuclease D activity"/>
    <property type="evidence" value="ECO:0007669"/>
    <property type="project" value="UniProtKB-UniRule"/>
</dbReference>
<dbReference type="GO" id="GO:0042780">
    <property type="term" value="P:tRNA 3'-end processing"/>
    <property type="evidence" value="ECO:0007669"/>
    <property type="project" value="UniProtKB-UniRule"/>
</dbReference>
<dbReference type="CDD" id="cd06142">
    <property type="entry name" value="RNaseD_exo"/>
    <property type="match status" value="1"/>
</dbReference>
<dbReference type="Gene3D" id="1.10.150.80">
    <property type="entry name" value="HRDC domain"/>
    <property type="match status" value="2"/>
</dbReference>
<dbReference type="Gene3D" id="3.30.420.10">
    <property type="entry name" value="Ribonuclease H-like superfamily/Ribonuclease H"/>
    <property type="match status" value="1"/>
</dbReference>
<dbReference type="HAMAP" id="MF_01899">
    <property type="entry name" value="RNase_D"/>
    <property type="match status" value="1"/>
</dbReference>
<dbReference type="InterPro" id="IPR002562">
    <property type="entry name" value="3'-5'_exonuclease_dom"/>
</dbReference>
<dbReference type="InterPro" id="IPR010997">
    <property type="entry name" value="HRDC-like_sf"/>
</dbReference>
<dbReference type="InterPro" id="IPR002121">
    <property type="entry name" value="HRDC_dom"/>
</dbReference>
<dbReference type="InterPro" id="IPR044876">
    <property type="entry name" value="HRDC_dom_sf"/>
</dbReference>
<dbReference type="InterPro" id="IPR006292">
    <property type="entry name" value="RNase_D"/>
</dbReference>
<dbReference type="InterPro" id="IPR051086">
    <property type="entry name" value="RNase_D-like"/>
</dbReference>
<dbReference type="InterPro" id="IPR012337">
    <property type="entry name" value="RNaseH-like_sf"/>
</dbReference>
<dbReference type="InterPro" id="IPR036397">
    <property type="entry name" value="RNaseH_sf"/>
</dbReference>
<dbReference type="NCBIfam" id="TIGR01388">
    <property type="entry name" value="rnd"/>
    <property type="match status" value="1"/>
</dbReference>
<dbReference type="PANTHER" id="PTHR47649">
    <property type="entry name" value="RIBONUCLEASE D"/>
    <property type="match status" value="1"/>
</dbReference>
<dbReference type="PANTHER" id="PTHR47649:SF1">
    <property type="entry name" value="RIBONUCLEASE D"/>
    <property type="match status" value="1"/>
</dbReference>
<dbReference type="Pfam" id="PF01612">
    <property type="entry name" value="DNA_pol_A_exo1"/>
    <property type="match status" value="1"/>
</dbReference>
<dbReference type="Pfam" id="PF00570">
    <property type="entry name" value="HRDC"/>
    <property type="match status" value="1"/>
</dbReference>
<dbReference type="SMART" id="SM00474">
    <property type="entry name" value="35EXOc"/>
    <property type="match status" value="1"/>
</dbReference>
<dbReference type="SMART" id="SM00341">
    <property type="entry name" value="HRDC"/>
    <property type="match status" value="1"/>
</dbReference>
<dbReference type="SUPFAM" id="SSF47819">
    <property type="entry name" value="HRDC-like"/>
    <property type="match status" value="2"/>
</dbReference>
<dbReference type="SUPFAM" id="SSF53098">
    <property type="entry name" value="Ribonuclease H-like"/>
    <property type="match status" value="1"/>
</dbReference>
<dbReference type="PROSITE" id="PS50967">
    <property type="entry name" value="HRDC"/>
    <property type="match status" value="1"/>
</dbReference>
<reference key="1">
    <citation type="submission" date="2007-06" db="EMBL/GenBank/DDBJ databases">
        <authorList>
            <person name="Dodson R.J."/>
            <person name="Harkins D."/>
            <person name="Paulsen I.T."/>
        </authorList>
    </citation>
    <scope>NUCLEOTIDE SEQUENCE [LARGE SCALE GENOMIC DNA]</scope>
    <source>
        <strain>DSM 24068 / PA7</strain>
    </source>
</reference>
<organism>
    <name type="scientific">Pseudomonas paraeruginosa (strain DSM 24068 / PA7)</name>
    <name type="common">Pseudomonas aeruginosa (strain PA7)</name>
    <dbReference type="NCBI Taxonomy" id="381754"/>
    <lineage>
        <taxon>Bacteria</taxon>
        <taxon>Pseudomonadati</taxon>
        <taxon>Pseudomonadota</taxon>
        <taxon>Gammaproteobacteria</taxon>
        <taxon>Pseudomonadales</taxon>
        <taxon>Pseudomonadaceae</taxon>
        <taxon>Pseudomonas</taxon>
        <taxon>Pseudomonas paraeruginosa</taxon>
    </lineage>
</organism>
<gene>
    <name evidence="1" type="primary">rnd</name>
    <name type="ordered locus">PSPA7_4097</name>
</gene>
<name>RND_PSEP7</name>
<evidence type="ECO:0000255" key="1">
    <source>
        <dbReference type="HAMAP-Rule" id="MF_01899"/>
    </source>
</evidence>
<evidence type="ECO:0000305" key="2"/>
<accession>A6V8R6</accession>
<protein>
    <recommendedName>
        <fullName evidence="1">Ribonuclease D</fullName>
        <shortName evidence="1">RNase D</shortName>
        <ecNumber evidence="1">3.1.13.5</ecNumber>
    </recommendedName>
</protein>
<keyword id="KW-0963">Cytoplasm</keyword>
<keyword id="KW-0269">Exonuclease</keyword>
<keyword id="KW-0378">Hydrolase</keyword>
<keyword id="KW-0540">Nuclease</keyword>
<keyword id="KW-0819">tRNA processing</keyword>
<feature type="chain" id="PRO_0000411069" description="Ribonuclease D">
    <location>
        <begin position="1"/>
        <end position="376"/>
    </location>
</feature>
<feature type="domain" description="3'-5' exonuclease" evidence="1">
    <location>
        <begin position="8"/>
        <end position="176"/>
    </location>
</feature>
<feature type="domain" description="HRDC" evidence="1">
    <location>
        <begin position="214"/>
        <end position="294"/>
    </location>
</feature>
<comment type="function">
    <text evidence="1">Exonuclease involved in the 3' processing of various precursor tRNAs. Initiates hydrolysis at the 3'-terminus of an RNA molecule and releases 5'-mononucleotides.</text>
</comment>
<comment type="catalytic activity">
    <reaction evidence="1">
        <text>Exonucleolytic cleavage that removes extra residues from the 3'-terminus of tRNA to produce 5'-mononucleotides.</text>
        <dbReference type="EC" id="3.1.13.5"/>
    </reaction>
</comment>
<comment type="cofactor">
    <cofactor evidence="1">
        <name>a divalent metal cation</name>
        <dbReference type="ChEBI" id="CHEBI:60240"/>
    </cofactor>
</comment>
<comment type="subcellular location">
    <subcellularLocation>
        <location evidence="1">Cytoplasm</location>
    </subcellularLocation>
</comment>
<comment type="similarity">
    <text evidence="1">Belongs to the RNase D family.</text>
</comment>
<comment type="sequence caution" evidence="2">
    <conflict type="erroneous initiation">
        <sequence resource="EMBL-CDS" id="ABR83083"/>
    </conflict>
    <text>Extended N-terminus.</text>
</comment>